<dbReference type="EC" id="6.5.1.2" evidence="1"/>
<dbReference type="EMBL" id="AJ749949">
    <property type="protein sequence ID" value="CAG46020.1"/>
    <property type="molecule type" value="Genomic_DNA"/>
</dbReference>
<dbReference type="RefSeq" id="WP_003024021.1">
    <property type="nucleotide sequence ID" value="NZ_CP010290.1"/>
</dbReference>
<dbReference type="RefSeq" id="YP_170332.1">
    <property type="nucleotide sequence ID" value="NC_006570.2"/>
</dbReference>
<dbReference type="SMR" id="Q5NF60"/>
<dbReference type="IntAct" id="Q5NF60">
    <property type="interactions" value="7"/>
</dbReference>
<dbReference type="STRING" id="177416.FTT_1387c"/>
<dbReference type="DNASU" id="3190767"/>
<dbReference type="EnsemblBacteria" id="CAG46020">
    <property type="protein sequence ID" value="CAG46020"/>
    <property type="gene ID" value="FTT_1387c"/>
</dbReference>
<dbReference type="KEGG" id="ftu:FTT_1387c"/>
<dbReference type="eggNOG" id="COG0272">
    <property type="taxonomic scope" value="Bacteria"/>
</dbReference>
<dbReference type="OrthoDB" id="9759736at2"/>
<dbReference type="Proteomes" id="UP000001174">
    <property type="component" value="Chromosome"/>
</dbReference>
<dbReference type="GO" id="GO:0005829">
    <property type="term" value="C:cytosol"/>
    <property type="evidence" value="ECO:0007669"/>
    <property type="project" value="TreeGrafter"/>
</dbReference>
<dbReference type="GO" id="GO:0003677">
    <property type="term" value="F:DNA binding"/>
    <property type="evidence" value="ECO:0007669"/>
    <property type="project" value="InterPro"/>
</dbReference>
<dbReference type="GO" id="GO:0003911">
    <property type="term" value="F:DNA ligase (NAD+) activity"/>
    <property type="evidence" value="ECO:0007669"/>
    <property type="project" value="UniProtKB-UniRule"/>
</dbReference>
<dbReference type="GO" id="GO:0046872">
    <property type="term" value="F:metal ion binding"/>
    <property type="evidence" value="ECO:0007669"/>
    <property type="project" value="UniProtKB-KW"/>
</dbReference>
<dbReference type="GO" id="GO:0006281">
    <property type="term" value="P:DNA repair"/>
    <property type="evidence" value="ECO:0007669"/>
    <property type="project" value="UniProtKB-KW"/>
</dbReference>
<dbReference type="GO" id="GO:0006260">
    <property type="term" value="P:DNA replication"/>
    <property type="evidence" value="ECO:0007669"/>
    <property type="project" value="UniProtKB-KW"/>
</dbReference>
<dbReference type="CDD" id="cd17748">
    <property type="entry name" value="BRCT_DNA_ligase_like"/>
    <property type="match status" value="1"/>
</dbReference>
<dbReference type="CDD" id="cd00114">
    <property type="entry name" value="LIGANc"/>
    <property type="match status" value="1"/>
</dbReference>
<dbReference type="FunFam" id="1.10.150.20:FF:000007">
    <property type="entry name" value="DNA ligase"/>
    <property type="match status" value="1"/>
</dbReference>
<dbReference type="FunFam" id="2.40.50.140:FF:000012">
    <property type="entry name" value="DNA ligase"/>
    <property type="match status" value="1"/>
</dbReference>
<dbReference type="FunFam" id="3.30.470.30:FF:000001">
    <property type="entry name" value="DNA ligase"/>
    <property type="match status" value="1"/>
</dbReference>
<dbReference type="Gene3D" id="6.20.10.30">
    <property type="match status" value="1"/>
</dbReference>
<dbReference type="Gene3D" id="1.10.150.20">
    <property type="entry name" value="5' to 3' exonuclease, C-terminal subdomain"/>
    <property type="match status" value="2"/>
</dbReference>
<dbReference type="Gene3D" id="3.40.50.10190">
    <property type="entry name" value="BRCT domain"/>
    <property type="match status" value="1"/>
</dbReference>
<dbReference type="Gene3D" id="3.30.470.30">
    <property type="entry name" value="DNA ligase/mRNA capping enzyme"/>
    <property type="match status" value="1"/>
</dbReference>
<dbReference type="Gene3D" id="1.10.287.610">
    <property type="entry name" value="Helix hairpin bin"/>
    <property type="match status" value="1"/>
</dbReference>
<dbReference type="Gene3D" id="2.40.50.140">
    <property type="entry name" value="Nucleic acid-binding proteins"/>
    <property type="match status" value="1"/>
</dbReference>
<dbReference type="HAMAP" id="MF_01588">
    <property type="entry name" value="DNA_ligase_A"/>
    <property type="match status" value="1"/>
</dbReference>
<dbReference type="InterPro" id="IPR001357">
    <property type="entry name" value="BRCT_dom"/>
</dbReference>
<dbReference type="InterPro" id="IPR036420">
    <property type="entry name" value="BRCT_dom_sf"/>
</dbReference>
<dbReference type="InterPro" id="IPR041663">
    <property type="entry name" value="DisA/LigA_HHH"/>
</dbReference>
<dbReference type="InterPro" id="IPR001679">
    <property type="entry name" value="DNA_ligase"/>
</dbReference>
<dbReference type="InterPro" id="IPR033136">
    <property type="entry name" value="DNA_ligase_CS"/>
</dbReference>
<dbReference type="InterPro" id="IPR013839">
    <property type="entry name" value="DNAligase_adenylation"/>
</dbReference>
<dbReference type="InterPro" id="IPR013840">
    <property type="entry name" value="DNAligase_N"/>
</dbReference>
<dbReference type="InterPro" id="IPR003583">
    <property type="entry name" value="Hlx-hairpin-Hlx_DNA-bd_motif"/>
</dbReference>
<dbReference type="InterPro" id="IPR012340">
    <property type="entry name" value="NA-bd_OB-fold"/>
</dbReference>
<dbReference type="InterPro" id="IPR004150">
    <property type="entry name" value="NAD_DNA_ligase_OB"/>
</dbReference>
<dbReference type="InterPro" id="IPR010994">
    <property type="entry name" value="RuvA_2-like"/>
</dbReference>
<dbReference type="InterPro" id="IPR004149">
    <property type="entry name" value="Znf_DNAligase_C4"/>
</dbReference>
<dbReference type="NCBIfam" id="TIGR00575">
    <property type="entry name" value="dnlj"/>
    <property type="match status" value="1"/>
</dbReference>
<dbReference type="NCBIfam" id="NF005932">
    <property type="entry name" value="PRK07956.1"/>
    <property type="match status" value="1"/>
</dbReference>
<dbReference type="PANTHER" id="PTHR23389">
    <property type="entry name" value="CHROMOSOME TRANSMISSION FIDELITY FACTOR 18"/>
    <property type="match status" value="1"/>
</dbReference>
<dbReference type="PANTHER" id="PTHR23389:SF9">
    <property type="entry name" value="DNA LIGASE"/>
    <property type="match status" value="1"/>
</dbReference>
<dbReference type="Pfam" id="PF00533">
    <property type="entry name" value="BRCT"/>
    <property type="match status" value="1"/>
</dbReference>
<dbReference type="Pfam" id="PF01653">
    <property type="entry name" value="DNA_ligase_aden"/>
    <property type="match status" value="1"/>
</dbReference>
<dbReference type="Pfam" id="PF03120">
    <property type="entry name" value="DNA_ligase_OB"/>
    <property type="match status" value="1"/>
</dbReference>
<dbReference type="Pfam" id="PF03119">
    <property type="entry name" value="DNA_ligase_ZBD"/>
    <property type="match status" value="1"/>
</dbReference>
<dbReference type="Pfam" id="PF12826">
    <property type="entry name" value="HHH_2"/>
    <property type="match status" value="1"/>
</dbReference>
<dbReference type="Pfam" id="PF22745">
    <property type="entry name" value="Nlig-Ia"/>
    <property type="match status" value="1"/>
</dbReference>
<dbReference type="PIRSF" id="PIRSF001604">
    <property type="entry name" value="LigA"/>
    <property type="match status" value="1"/>
</dbReference>
<dbReference type="SMART" id="SM00292">
    <property type="entry name" value="BRCT"/>
    <property type="match status" value="1"/>
</dbReference>
<dbReference type="SMART" id="SM00278">
    <property type="entry name" value="HhH1"/>
    <property type="match status" value="4"/>
</dbReference>
<dbReference type="SMART" id="SM00532">
    <property type="entry name" value="LIGANc"/>
    <property type="match status" value="1"/>
</dbReference>
<dbReference type="SUPFAM" id="SSF52113">
    <property type="entry name" value="BRCT domain"/>
    <property type="match status" value="1"/>
</dbReference>
<dbReference type="SUPFAM" id="SSF56091">
    <property type="entry name" value="DNA ligase/mRNA capping enzyme, catalytic domain"/>
    <property type="match status" value="1"/>
</dbReference>
<dbReference type="SUPFAM" id="SSF50249">
    <property type="entry name" value="Nucleic acid-binding proteins"/>
    <property type="match status" value="1"/>
</dbReference>
<dbReference type="SUPFAM" id="SSF47781">
    <property type="entry name" value="RuvA domain 2-like"/>
    <property type="match status" value="1"/>
</dbReference>
<dbReference type="PROSITE" id="PS50172">
    <property type="entry name" value="BRCT"/>
    <property type="match status" value="1"/>
</dbReference>
<dbReference type="PROSITE" id="PS01056">
    <property type="entry name" value="DNA_LIGASE_N2"/>
    <property type="match status" value="1"/>
</dbReference>
<organism>
    <name type="scientific">Francisella tularensis subsp. tularensis (strain SCHU S4 / Schu 4)</name>
    <dbReference type="NCBI Taxonomy" id="177416"/>
    <lineage>
        <taxon>Bacteria</taxon>
        <taxon>Pseudomonadati</taxon>
        <taxon>Pseudomonadota</taxon>
        <taxon>Gammaproteobacteria</taxon>
        <taxon>Thiotrichales</taxon>
        <taxon>Francisellaceae</taxon>
        <taxon>Francisella</taxon>
    </lineage>
</organism>
<feature type="chain" id="PRO_0000313241" description="DNA ligase">
    <location>
        <begin position="1"/>
        <end position="678"/>
    </location>
</feature>
<feature type="domain" description="BRCT" evidence="1">
    <location>
        <begin position="602"/>
        <end position="678"/>
    </location>
</feature>
<feature type="active site" description="N6-AMP-lysine intermediate" evidence="1">
    <location>
        <position position="124"/>
    </location>
</feature>
<feature type="binding site" evidence="1">
    <location>
        <begin position="47"/>
        <end position="51"/>
    </location>
    <ligand>
        <name>NAD(+)</name>
        <dbReference type="ChEBI" id="CHEBI:57540"/>
    </ligand>
</feature>
<feature type="binding site" evidence="1">
    <location>
        <begin position="96"/>
        <end position="97"/>
    </location>
    <ligand>
        <name>NAD(+)</name>
        <dbReference type="ChEBI" id="CHEBI:57540"/>
    </ligand>
</feature>
<feature type="binding site" evidence="1">
    <location>
        <position position="122"/>
    </location>
    <ligand>
        <name>NAD(+)</name>
        <dbReference type="ChEBI" id="CHEBI:57540"/>
    </ligand>
</feature>
<feature type="binding site" evidence="1">
    <location>
        <position position="145"/>
    </location>
    <ligand>
        <name>NAD(+)</name>
        <dbReference type="ChEBI" id="CHEBI:57540"/>
    </ligand>
</feature>
<feature type="binding site" evidence="1">
    <location>
        <position position="182"/>
    </location>
    <ligand>
        <name>NAD(+)</name>
        <dbReference type="ChEBI" id="CHEBI:57540"/>
    </ligand>
</feature>
<feature type="binding site" evidence="1">
    <location>
        <position position="300"/>
    </location>
    <ligand>
        <name>NAD(+)</name>
        <dbReference type="ChEBI" id="CHEBI:57540"/>
    </ligand>
</feature>
<feature type="binding site" evidence="1">
    <location>
        <position position="324"/>
    </location>
    <ligand>
        <name>NAD(+)</name>
        <dbReference type="ChEBI" id="CHEBI:57540"/>
    </ligand>
</feature>
<feature type="binding site" evidence="1">
    <location>
        <position position="418"/>
    </location>
    <ligand>
        <name>Zn(2+)</name>
        <dbReference type="ChEBI" id="CHEBI:29105"/>
    </ligand>
</feature>
<feature type="binding site" evidence="1">
    <location>
        <position position="421"/>
    </location>
    <ligand>
        <name>Zn(2+)</name>
        <dbReference type="ChEBI" id="CHEBI:29105"/>
    </ligand>
</feature>
<feature type="binding site" evidence="1">
    <location>
        <position position="436"/>
    </location>
    <ligand>
        <name>Zn(2+)</name>
        <dbReference type="ChEBI" id="CHEBI:29105"/>
    </ligand>
</feature>
<feature type="binding site" evidence="1">
    <location>
        <position position="442"/>
    </location>
    <ligand>
        <name>Zn(2+)</name>
        <dbReference type="ChEBI" id="CHEBI:29105"/>
    </ligand>
</feature>
<protein>
    <recommendedName>
        <fullName evidence="1">DNA ligase</fullName>
        <ecNumber evidence="1">6.5.1.2</ecNumber>
    </recommendedName>
    <alternativeName>
        <fullName evidence="1">Polydeoxyribonucleotide synthase [NAD(+)]</fullName>
    </alternativeName>
</protein>
<proteinExistence type="inferred from homology"/>
<keyword id="KW-0227">DNA damage</keyword>
<keyword id="KW-0234">DNA repair</keyword>
<keyword id="KW-0235">DNA replication</keyword>
<keyword id="KW-0436">Ligase</keyword>
<keyword id="KW-0460">Magnesium</keyword>
<keyword id="KW-0464">Manganese</keyword>
<keyword id="KW-0479">Metal-binding</keyword>
<keyword id="KW-0520">NAD</keyword>
<keyword id="KW-1185">Reference proteome</keyword>
<keyword id="KW-0862">Zinc</keyword>
<sequence length="678" mass="76455">MTPNEFFSIKYHILAKAELKAYIDKLADYLSQQSYLYHTLDKPIISDSDYDKLFRLLQDLVNDNPQFKPINSVLDRVGGEVLAGFETIKHKKKMTSLANVFSLEELRDFYDKIEYDIELECEPKMDGLAISIFYKNGKFDYAVTRGDGIQGEKVSENVKTIRNVPLKLNTSNPPEELEVRGEIILDKQSFLSLNEYMQTHENKTFANPRNAAAGSIRMLDSKVVAKRPLKLYSYGIGYFSKDFVYPETQFELMQLLQSFGFTISDNMFLAKNFSEVEEYHHKMSHQRADLAYDIDGLVFKVNNIKLQDTIGYTARGPKWAIAYKFPAEEVESEVLNVEFQVGRTGAITPVARLKPVAVGGVIVSNATLHNINEIKRKDIRVGDRVIVRRAGDVIPEVVKSLPQYRKSDAQMVEMPTNCPVCDSKIENVNDQAIYRCTGGWHCQAQTTERLKHFVSRKAMDIDKLGAKLIEQLVAANLIKYPADIYKLNFEQLTGLERMAAKSSQNVLDSITKSKEPSLARFIFAIGIKDIGEVSSDALANHFGSLESFRDAKFEELIEINDIGEIMANNIVSFWHDSLNIKIVEEFLAIGIKIQNPVKVEHAYNESFTGKTVVITGSFENYGRTELTQLLKSIGAKVTSSVSKKTDMVICGDNAGSKLTKAQELGVEVILEDNLKDLL</sequence>
<reference key="1">
    <citation type="journal article" date="2005" name="Nat. Genet.">
        <title>The complete genome sequence of Francisella tularensis, the causative agent of tularemia.</title>
        <authorList>
            <person name="Larsson P."/>
            <person name="Oyston P.C.F."/>
            <person name="Chain P."/>
            <person name="Chu M.C."/>
            <person name="Duffield M."/>
            <person name="Fuxelius H.-H."/>
            <person name="Garcia E."/>
            <person name="Haelltorp G."/>
            <person name="Johansson D."/>
            <person name="Isherwood K.E."/>
            <person name="Karp P.D."/>
            <person name="Larsson E."/>
            <person name="Liu Y."/>
            <person name="Michell S."/>
            <person name="Prior J."/>
            <person name="Prior R."/>
            <person name="Malfatti S."/>
            <person name="Sjoestedt A."/>
            <person name="Svensson K."/>
            <person name="Thompson N."/>
            <person name="Vergez L."/>
            <person name="Wagg J.K."/>
            <person name="Wren B.W."/>
            <person name="Lindler L.E."/>
            <person name="Andersson S.G.E."/>
            <person name="Forsman M."/>
            <person name="Titball R.W."/>
        </authorList>
    </citation>
    <scope>NUCLEOTIDE SEQUENCE [LARGE SCALE GENOMIC DNA]</scope>
    <source>
        <strain>SCHU S4 / Schu 4</strain>
    </source>
</reference>
<evidence type="ECO:0000255" key="1">
    <source>
        <dbReference type="HAMAP-Rule" id="MF_01588"/>
    </source>
</evidence>
<name>DNLJ_FRATT</name>
<accession>Q5NF60</accession>
<gene>
    <name evidence="1" type="primary">ligA</name>
    <name type="ordered locus">FTT_1387c</name>
</gene>
<comment type="function">
    <text evidence="1">DNA ligase that catalyzes the formation of phosphodiester linkages between 5'-phosphoryl and 3'-hydroxyl groups in double-stranded DNA using NAD as a coenzyme and as the energy source for the reaction. It is essential for DNA replication and repair of damaged DNA.</text>
</comment>
<comment type="catalytic activity">
    <reaction evidence="1">
        <text>NAD(+) + (deoxyribonucleotide)n-3'-hydroxyl + 5'-phospho-(deoxyribonucleotide)m = (deoxyribonucleotide)n+m + AMP + beta-nicotinamide D-nucleotide.</text>
        <dbReference type="EC" id="6.5.1.2"/>
    </reaction>
</comment>
<comment type="cofactor">
    <cofactor evidence="1">
        <name>Mg(2+)</name>
        <dbReference type="ChEBI" id="CHEBI:18420"/>
    </cofactor>
    <cofactor evidence="1">
        <name>Mn(2+)</name>
        <dbReference type="ChEBI" id="CHEBI:29035"/>
    </cofactor>
</comment>
<comment type="similarity">
    <text evidence="1">Belongs to the NAD-dependent DNA ligase family. LigA subfamily.</text>
</comment>